<gene>
    <name evidence="1" type="primary">rnhB</name>
    <name type="ordered locus">Pisl_1305</name>
</gene>
<dbReference type="EC" id="3.1.26.4" evidence="1"/>
<dbReference type="EMBL" id="CP000504">
    <property type="protein sequence ID" value="ABL88468.1"/>
    <property type="molecule type" value="Genomic_DNA"/>
</dbReference>
<dbReference type="RefSeq" id="WP_011763043.1">
    <property type="nucleotide sequence ID" value="NC_008701.1"/>
</dbReference>
<dbReference type="SMR" id="A1RU36"/>
<dbReference type="STRING" id="384616.Pisl_1305"/>
<dbReference type="GeneID" id="4617206"/>
<dbReference type="KEGG" id="pis:Pisl_1305"/>
<dbReference type="eggNOG" id="arCOG04121">
    <property type="taxonomic scope" value="Archaea"/>
</dbReference>
<dbReference type="HOGENOM" id="CLU_036532_0_4_2"/>
<dbReference type="OrthoDB" id="33866at2157"/>
<dbReference type="Proteomes" id="UP000002595">
    <property type="component" value="Chromosome"/>
</dbReference>
<dbReference type="GO" id="GO:0005737">
    <property type="term" value="C:cytoplasm"/>
    <property type="evidence" value="ECO:0007669"/>
    <property type="project" value="UniProtKB-SubCell"/>
</dbReference>
<dbReference type="GO" id="GO:0032299">
    <property type="term" value="C:ribonuclease H2 complex"/>
    <property type="evidence" value="ECO:0007669"/>
    <property type="project" value="TreeGrafter"/>
</dbReference>
<dbReference type="GO" id="GO:0030145">
    <property type="term" value="F:manganese ion binding"/>
    <property type="evidence" value="ECO:0007669"/>
    <property type="project" value="UniProtKB-UniRule"/>
</dbReference>
<dbReference type="GO" id="GO:0003723">
    <property type="term" value="F:RNA binding"/>
    <property type="evidence" value="ECO:0007669"/>
    <property type="project" value="InterPro"/>
</dbReference>
<dbReference type="GO" id="GO:0004523">
    <property type="term" value="F:RNA-DNA hybrid ribonuclease activity"/>
    <property type="evidence" value="ECO:0007669"/>
    <property type="project" value="UniProtKB-UniRule"/>
</dbReference>
<dbReference type="GO" id="GO:0043137">
    <property type="term" value="P:DNA replication, removal of RNA primer"/>
    <property type="evidence" value="ECO:0007669"/>
    <property type="project" value="TreeGrafter"/>
</dbReference>
<dbReference type="GO" id="GO:0006298">
    <property type="term" value="P:mismatch repair"/>
    <property type="evidence" value="ECO:0007669"/>
    <property type="project" value="TreeGrafter"/>
</dbReference>
<dbReference type="CDD" id="cd07180">
    <property type="entry name" value="RNase_HII_archaea_like"/>
    <property type="match status" value="1"/>
</dbReference>
<dbReference type="Gene3D" id="3.30.420.10">
    <property type="entry name" value="Ribonuclease H-like superfamily/Ribonuclease H"/>
    <property type="match status" value="1"/>
</dbReference>
<dbReference type="HAMAP" id="MF_00052_A">
    <property type="entry name" value="RNase_HII_A"/>
    <property type="match status" value="1"/>
</dbReference>
<dbReference type="InterPro" id="IPR004649">
    <property type="entry name" value="RNase_H2_suA"/>
</dbReference>
<dbReference type="InterPro" id="IPR001352">
    <property type="entry name" value="RNase_HII/HIII"/>
</dbReference>
<dbReference type="InterPro" id="IPR024567">
    <property type="entry name" value="RNase_HII/HIII_dom"/>
</dbReference>
<dbReference type="InterPro" id="IPR020787">
    <property type="entry name" value="RNase_HII_arc"/>
</dbReference>
<dbReference type="InterPro" id="IPR012337">
    <property type="entry name" value="RNaseH-like_sf"/>
</dbReference>
<dbReference type="InterPro" id="IPR036397">
    <property type="entry name" value="RNaseH_sf"/>
</dbReference>
<dbReference type="NCBIfam" id="TIGR00729">
    <property type="entry name" value="ribonuclease HII"/>
    <property type="match status" value="1"/>
</dbReference>
<dbReference type="PANTHER" id="PTHR10954:SF23">
    <property type="entry name" value="RIBONUCLEASE"/>
    <property type="match status" value="1"/>
</dbReference>
<dbReference type="PANTHER" id="PTHR10954">
    <property type="entry name" value="RIBONUCLEASE H2 SUBUNIT A"/>
    <property type="match status" value="1"/>
</dbReference>
<dbReference type="Pfam" id="PF01351">
    <property type="entry name" value="RNase_HII"/>
    <property type="match status" value="1"/>
</dbReference>
<dbReference type="SUPFAM" id="SSF53098">
    <property type="entry name" value="Ribonuclease H-like"/>
    <property type="match status" value="1"/>
</dbReference>
<dbReference type="PROSITE" id="PS51975">
    <property type="entry name" value="RNASE_H_2"/>
    <property type="match status" value="1"/>
</dbReference>
<feature type="chain" id="PRO_0000334986" description="Ribonuclease HII">
    <location>
        <begin position="1"/>
        <end position="195"/>
    </location>
</feature>
<feature type="domain" description="RNase H type-2" evidence="2">
    <location>
        <begin position="1"/>
        <end position="195"/>
    </location>
</feature>
<feature type="binding site" evidence="1">
    <location>
        <position position="6"/>
    </location>
    <ligand>
        <name>a divalent metal cation</name>
        <dbReference type="ChEBI" id="CHEBI:60240"/>
    </ligand>
</feature>
<feature type="binding site" evidence="1">
    <location>
        <position position="7"/>
    </location>
    <ligand>
        <name>a divalent metal cation</name>
        <dbReference type="ChEBI" id="CHEBI:60240"/>
    </ligand>
</feature>
<feature type="binding site" evidence="1">
    <location>
        <position position="101"/>
    </location>
    <ligand>
        <name>a divalent metal cation</name>
        <dbReference type="ChEBI" id="CHEBI:60240"/>
    </ligand>
</feature>
<name>RNH2_PYRIL</name>
<comment type="function">
    <text evidence="1">Endonuclease that specifically degrades the RNA of RNA-DNA hybrids.</text>
</comment>
<comment type="catalytic activity">
    <reaction evidence="1">
        <text>Endonucleolytic cleavage to 5'-phosphomonoester.</text>
        <dbReference type="EC" id="3.1.26.4"/>
    </reaction>
</comment>
<comment type="cofactor">
    <cofactor evidence="1">
        <name>Mn(2+)</name>
        <dbReference type="ChEBI" id="CHEBI:29035"/>
    </cofactor>
    <cofactor evidence="1">
        <name>Mg(2+)</name>
        <dbReference type="ChEBI" id="CHEBI:18420"/>
    </cofactor>
    <text evidence="1">Manganese or magnesium. Binds 1 divalent metal ion per monomer in the absence of substrate. May bind a second metal ion after substrate binding.</text>
</comment>
<comment type="subcellular location">
    <subcellularLocation>
        <location evidence="1">Cytoplasm</location>
    </subcellularLocation>
</comment>
<comment type="similarity">
    <text evidence="1">Belongs to the RNase HII family.</text>
</comment>
<reference key="1">
    <citation type="submission" date="2006-12" db="EMBL/GenBank/DDBJ databases">
        <title>Complete sequence of Pyrobaculum islandicum DSM 4184.</title>
        <authorList>
            <person name="Copeland A."/>
            <person name="Lucas S."/>
            <person name="Lapidus A."/>
            <person name="Barry K."/>
            <person name="Detter J.C."/>
            <person name="Glavina del Rio T."/>
            <person name="Dalin E."/>
            <person name="Tice H."/>
            <person name="Pitluck S."/>
            <person name="Meincke L."/>
            <person name="Brettin T."/>
            <person name="Bruce D."/>
            <person name="Han C."/>
            <person name="Tapia R."/>
            <person name="Gilna P."/>
            <person name="Schmutz J."/>
            <person name="Larimer F."/>
            <person name="Land M."/>
            <person name="Hauser L."/>
            <person name="Kyrpides N."/>
            <person name="Mikhailova N."/>
            <person name="Cozen A.E."/>
            <person name="Fitz-Gibbon S.T."/>
            <person name="House C.H."/>
            <person name="Saltikov C."/>
            <person name="Lowe T."/>
            <person name="Richardson P."/>
        </authorList>
    </citation>
    <scope>NUCLEOTIDE SEQUENCE [LARGE SCALE GENOMIC DNA]</scope>
    <source>
        <strain>DSM 4184 / JCM 9189 / GEO3</strain>
    </source>
</reference>
<proteinExistence type="inferred from homology"/>
<keyword id="KW-0963">Cytoplasm</keyword>
<keyword id="KW-0255">Endonuclease</keyword>
<keyword id="KW-0378">Hydrolase</keyword>
<keyword id="KW-0464">Manganese</keyword>
<keyword id="KW-0479">Metal-binding</keyword>
<keyword id="KW-0540">Nuclease</keyword>
<evidence type="ECO:0000255" key="1">
    <source>
        <dbReference type="HAMAP-Rule" id="MF_00052"/>
    </source>
</evidence>
<evidence type="ECO:0000255" key="2">
    <source>
        <dbReference type="PROSITE-ProRule" id="PRU01319"/>
    </source>
</evidence>
<sequence>MICGIDEAGRGPVVGPMVIAAVAGDGERLLQLGVRDSKTLSPTKREVIYARIIEVADCVNYVVVEPHIIDEYVRRRMLNSLELDFTARLIELCPAELYYVDSPDVNSRRYGDALSFITGRRVVALHGGESVPQVAAASIVAKVIRDRLIDILKREIGDFGSGYPSDVKTIEWLRLGKIPVECVRRSWRTLRYLNT</sequence>
<protein>
    <recommendedName>
        <fullName evidence="1">Ribonuclease HII</fullName>
        <shortName evidence="1">RNase HII</shortName>
        <ecNumber evidence="1">3.1.26.4</ecNumber>
    </recommendedName>
</protein>
<accession>A1RU36</accession>
<organism>
    <name type="scientific">Pyrobaculum islandicum (strain DSM 4184 / JCM 9189 / GEO3)</name>
    <dbReference type="NCBI Taxonomy" id="384616"/>
    <lineage>
        <taxon>Archaea</taxon>
        <taxon>Thermoproteota</taxon>
        <taxon>Thermoprotei</taxon>
        <taxon>Thermoproteales</taxon>
        <taxon>Thermoproteaceae</taxon>
        <taxon>Pyrobaculum</taxon>
    </lineage>
</organism>